<organism>
    <name type="scientific">Methylobacillus flagellatus (strain ATCC 51484 / DSM 6875 / VKM B-1610 / KT)</name>
    <dbReference type="NCBI Taxonomy" id="265072"/>
    <lineage>
        <taxon>Bacteria</taxon>
        <taxon>Pseudomonadati</taxon>
        <taxon>Pseudomonadota</taxon>
        <taxon>Betaproteobacteria</taxon>
        <taxon>Nitrosomonadales</taxon>
        <taxon>Methylophilaceae</taxon>
        <taxon>Methylobacillus</taxon>
    </lineage>
</organism>
<gene>
    <name evidence="1" type="primary">rplT</name>
    <name type="ordered locus">Mfla_2000</name>
</gene>
<name>RL20_METFK</name>
<evidence type="ECO:0000255" key="1">
    <source>
        <dbReference type="HAMAP-Rule" id="MF_00382"/>
    </source>
</evidence>
<evidence type="ECO:0000305" key="2"/>
<protein>
    <recommendedName>
        <fullName evidence="1">Large ribosomal subunit protein bL20</fullName>
    </recommendedName>
    <alternativeName>
        <fullName evidence="2">50S ribosomal protein L20</fullName>
    </alternativeName>
</protein>
<reference key="1">
    <citation type="submission" date="2006-03" db="EMBL/GenBank/DDBJ databases">
        <title>Complete sequence of Methylobacillus flagellatus KT.</title>
        <authorList>
            <consortium name="US DOE Joint Genome Institute"/>
            <person name="Copeland A."/>
            <person name="Lucas S."/>
            <person name="Lapidus A."/>
            <person name="Barry K."/>
            <person name="Detter J.C."/>
            <person name="Glavina del Rio T."/>
            <person name="Hammon N."/>
            <person name="Israni S."/>
            <person name="Dalin E."/>
            <person name="Tice H."/>
            <person name="Pitluck S."/>
            <person name="Brettin T."/>
            <person name="Bruce D."/>
            <person name="Han C."/>
            <person name="Tapia R."/>
            <person name="Saunders E."/>
            <person name="Gilna P."/>
            <person name="Schmutz J."/>
            <person name="Larimer F."/>
            <person name="Land M."/>
            <person name="Kyrpides N."/>
            <person name="Anderson I."/>
            <person name="Richardson P."/>
        </authorList>
    </citation>
    <scope>NUCLEOTIDE SEQUENCE [LARGE SCALE GENOMIC DNA]</scope>
    <source>
        <strain>ATCC 51484 / DSM 6875 / VKM B-1610 / KT</strain>
    </source>
</reference>
<proteinExistence type="inferred from homology"/>
<comment type="function">
    <text evidence="1">Binds directly to 23S ribosomal RNA and is necessary for the in vitro assembly process of the 50S ribosomal subunit. It is not involved in the protein synthesizing functions of that subunit.</text>
</comment>
<comment type="similarity">
    <text evidence="1">Belongs to the bacterial ribosomal protein bL20 family.</text>
</comment>
<keyword id="KW-1185">Reference proteome</keyword>
<keyword id="KW-0687">Ribonucleoprotein</keyword>
<keyword id="KW-0689">Ribosomal protein</keyword>
<keyword id="KW-0694">RNA-binding</keyword>
<keyword id="KW-0699">rRNA-binding</keyword>
<accession>Q1GZS0</accession>
<dbReference type="EMBL" id="CP000284">
    <property type="protein sequence ID" value="ABE50267.1"/>
    <property type="molecule type" value="Genomic_DNA"/>
</dbReference>
<dbReference type="RefSeq" id="WP_011480221.1">
    <property type="nucleotide sequence ID" value="NC_007947.1"/>
</dbReference>
<dbReference type="SMR" id="Q1GZS0"/>
<dbReference type="STRING" id="265072.Mfla_2000"/>
<dbReference type="KEGG" id="mfa:Mfla_2000"/>
<dbReference type="eggNOG" id="COG0292">
    <property type="taxonomic scope" value="Bacteria"/>
</dbReference>
<dbReference type="HOGENOM" id="CLU_123265_0_1_4"/>
<dbReference type="OrthoDB" id="9808966at2"/>
<dbReference type="Proteomes" id="UP000002440">
    <property type="component" value="Chromosome"/>
</dbReference>
<dbReference type="GO" id="GO:1990904">
    <property type="term" value="C:ribonucleoprotein complex"/>
    <property type="evidence" value="ECO:0007669"/>
    <property type="project" value="UniProtKB-KW"/>
</dbReference>
<dbReference type="GO" id="GO:0005840">
    <property type="term" value="C:ribosome"/>
    <property type="evidence" value="ECO:0007669"/>
    <property type="project" value="UniProtKB-KW"/>
</dbReference>
<dbReference type="GO" id="GO:0019843">
    <property type="term" value="F:rRNA binding"/>
    <property type="evidence" value="ECO:0007669"/>
    <property type="project" value="UniProtKB-UniRule"/>
</dbReference>
<dbReference type="GO" id="GO:0003735">
    <property type="term" value="F:structural constituent of ribosome"/>
    <property type="evidence" value="ECO:0007669"/>
    <property type="project" value="InterPro"/>
</dbReference>
<dbReference type="GO" id="GO:0000027">
    <property type="term" value="P:ribosomal large subunit assembly"/>
    <property type="evidence" value="ECO:0007669"/>
    <property type="project" value="UniProtKB-UniRule"/>
</dbReference>
<dbReference type="GO" id="GO:0006412">
    <property type="term" value="P:translation"/>
    <property type="evidence" value="ECO:0007669"/>
    <property type="project" value="InterPro"/>
</dbReference>
<dbReference type="CDD" id="cd07026">
    <property type="entry name" value="Ribosomal_L20"/>
    <property type="match status" value="1"/>
</dbReference>
<dbReference type="FunFam" id="1.10.1900.20:FF:000001">
    <property type="entry name" value="50S ribosomal protein L20"/>
    <property type="match status" value="1"/>
</dbReference>
<dbReference type="Gene3D" id="6.10.160.10">
    <property type="match status" value="1"/>
</dbReference>
<dbReference type="Gene3D" id="1.10.1900.20">
    <property type="entry name" value="Ribosomal protein L20"/>
    <property type="match status" value="1"/>
</dbReference>
<dbReference type="HAMAP" id="MF_00382">
    <property type="entry name" value="Ribosomal_bL20"/>
    <property type="match status" value="1"/>
</dbReference>
<dbReference type="InterPro" id="IPR005813">
    <property type="entry name" value="Ribosomal_bL20"/>
</dbReference>
<dbReference type="InterPro" id="IPR049946">
    <property type="entry name" value="RIBOSOMAL_L20_CS"/>
</dbReference>
<dbReference type="InterPro" id="IPR035566">
    <property type="entry name" value="Ribosomal_protein_bL20_C"/>
</dbReference>
<dbReference type="NCBIfam" id="TIGR01032">
    <property type="entry name" value="rplT_bact"/>
    <property type="match status" value="1"/>
</dbReference>
<dbReference type="PANTHER" id="PTHR10986">
    <property type="entry name" value="39S RIBOSOMAL PROTEIN L20"/>
    <property type="match status" value="1"/>
</dbReference>
<dbReference type="Pfam" id="PF00453">
    <property type="entry name" value="Ribosomal_L20"/>
    <property type="match status" value="1"/>
</dbReference>
<dbReference type="PRINTS" id="PR00062">
    <property type="entry name" value="RIBOSOMALL20"/>
</dbReference>
<dbReference type="SUPFAM" id="SSF74731">
    <property type="entry name" value="Ribosomal protein L20"/>
    <property type="match status" value="1"/>
</dbReference>
<dbReference type="PROSITE" id="PS00937">
    <property type="entry name" value="RIBOSOMAL_L20"/>
    <property type="match status" value="1"/>
</dbReference>
<sequence>MPRVKRGVIARARHKKVLNAAKGYRGRRKNVYRIAKQAVMKAGQYAYRDRRQRKRQFRALWIARINAGAREYGLTYSRFINGLKKSAVEVDRKVLADLAVFDKQAFAKFAELAKSGLAAA</sequence>
<feature type="chain" id="PRO_1000049009" description="Large ribosomal subunit protein bL20">
    <location>
        <begin position="1"/>
        <end position="120"/>
    </location>
</feature>